<accession>P0CM52</accession>
<accession>Q55ZY3</accession>
<accession>Q5KP91</accession>
<proteinExistence type="inferred from homology"/>
<protein>
    <recommendedName>
        <fullName>Iron-sulfur cluster assembly factor IBA57 homolog, mitochondrial</fullName>
    </recommendedName>
</protein>
<gene>
    <name type="primary">CAF17</name>
    <name type="ordered locus">CNA03770</name>
</gene>
<sequence>MAAPRIAHLAHKSVLELSGPDAQKFLKGLSCKDVEYLAGGYSGFLNASGRVLHTAFVFPRSKNSYLITHESPEDHPAPLTSLLPPFKLRSKVRIKDVTSQWDAWSAWGSDLQGGPSPIRTWKMGSGGASESHWDWEGGVRDLGLRDDEVGCWDLRAGWPHMGRQLLIPKGEKPSLATSHDLGNMDDYELHRMLLGVPEGPTEILPGHALPLESCMDIHGGVDFRKGCFLGQELTVRTYHTGATRKRILPVRLIPLDQTSSSSISDLLSSSPQQSLDEVSTPLDITYHPPSSSATRKPRSAGKILSLHNAVGLALVRLEMAERCWWSGDILRSSVSQWLDSGAGRLTTQVNGKEWGVYVGQGEAYAAALEHMSSSS</sequence>
<feature type="transit peptide" description="Mitochondrion" evidence="2">
    <location>
        <begin position="1"/>
        <end status="unknown"/>
    </location>
</feature>
<feature type="chain" id="PRO_0000301698" description="Iron-sulfur cluster assembly factor IBA57 homolog, mitochondrial">
    <location>
        <begin status="unknown"/>
        <end position="375"/>
    </location>
</feature>
<name>CAF17_CRYNJ</name>
<reference key="1">
    <citation type="journal article" date="2005" name="Science">
        <title>The genome of the basidiomycetous yeast and human pathogen Cryptococcus neoformans.</title>
        <authorList>
            <person name="Loftus B.J."/>
            <person name="Fung E."/>
            <person name="Roncaglia P."/>
            <person name="Rowley D."/>
            <person name="Amedeo P."/>
            <person name="Bruno D."/>
            <person name="Vamathevan J."/>
            <person name="Miranda M."/>
            <person name="Anderson I.J."/>
            <person name="Fraser J.A."/>
            <person name="Allen J.E."/>
            <person name="Bosdet I.E."/>
            <person name="Brent M.R."/>
            <person name="Chiu R."/>
            <person name="Doering T.L."/>
            <person name="Donlin M.J."/>
            <person name="D'Souza C.A."/>
            <person name="Fox D.S."/>
            <person name="Grinberg V."/>
            <person name="Fu J."/>
            <person name="Fukushima M."/>
            <person name="Haas B.J."/>
            <person name="Huang J.C."/>
            <person name="Janbon G."/>
            <person name="Jones S.J.M."/>
            <person name="Koo H.L."/>
            <person name="Krzywinski M.I."/>
            <person name="Kwon-Chung K.J."/>
            <person name="Lengeler K.B."/>
            <person name="Maiti R."/>
            <person name="Marra M.A."/>
            <person name="Marra R.E."/>
            <person name="Mathewson C.A."/>
            <person name="Mitchell T.G."/>
            <person name="Pertea M."/>
            <person name="Riggs F.R."/>
            <person name="Salzberg S.L."/>
            <person name="Schein J.E."/>
            <person name="Shvartsbeyn A."/>
            <person name="Shin H."/>
            <person name="Shumway M."/>
            <person name="Specht C.A."/>
            <person name="Suh B.B."/>
            <person name="Tenney A."/>
            <person name="Utterback T.R."/>
            <person name="Wickes B.L."/>
            <person name="Wortman J.R."/>
            <person name="Wye N.H."/>
            <person name="Kronstad J.W."/>
            <person name="Lodge J.K."/>
            <person name="Heitman J."/>
            <person name="Davis R.W."/>
            <person name="Fraser C.M."/>
            <person name="Hyman R.W."/>
        </authorList>
    </citation>
    <scope>NUCLEOTIDE SEQUENCE [LARGE SCALE GENOMIC DNA]</scope>
    <source>
        <strain>JEC21 / ATCC MYA-565</strain>
    </source>
</reference>
<dbReference type="EMBL" id="AE017341">
    <property type="protein sequence ID" value="AAW40892.1"/>
    <property type="molecule type" value="Genomic_DNA"/>
</dbReference>
<dbReference type="RefSeq" id="XP_566711.1">
    <property type="nucleotide sequence ID" value="XM_566711.1"/>
</dbReference>
<dbReference type="SMR" id="P0CM52"/>
<dbReference type="FunCoup" id="P0CM52">
    <property type="interactions" value="139"/>
</dbReference>
<dbReference type="STRING" id="214684.P0CM52"/>
<dbReference type="PaxDb" id="214684-P0CM52"/>
<dbReference type="EnsemblFungi" id="AAW40892">
    <property type="protein sequence ID" value="AAW40892"/>
    <property type="gene ID" value="CNA03770"/>
</dbReference>
<dbReference type="VEuPathDB" id="FungiDB:CNA03770"/>
<dbReference type="eggNOG" id="KOG2929">
    <property type="taxonomic scope" value="Eukaryota"/>
</dbReference>
<dbReference type="HOGENOM" id="CLU_007884_7_0_1"/>
<dbReference type="InParanoid" id="P0CM52"/>
<dbReference type="OMA" id="NMLVAND"/>
<dbReference type="OrthoDB" id="191995at2759"/>
<dbReference type="Proteomes" id="UP000002149">
    <property type="component" value="Chromosome 1"/>
</dbReference>
<dbReference type="GO" id="GO:0005759">
    <property type="term" value="C:mitochondrial matrix"/>
    <property type="evidence" value="ECO:0000318"/>
    <property type="project" value="GO_Central"/>
</dbReference>
<dbReference type="GO" id="GO:0016740">
    <property type="term" value="F:transferase activity"/>
    <property type="evidence" value="ECO:0007669"/>
    <property type="project" value="UniProtKB-KW"/>
</dbReference>
<dbReference type="GO" id="GO:0016226">
    <property type="term" value="P:iron-sulfur cluster assembly"/>
    <property type="evidence" value="ECO:0000318"/>
    <property type="project" value="GO_Central"/>
</dbReference>
<dbReference type="FunFam" id="3.30.1360.120:FF:000036">
    <property type="entry name" value="Putative transferase CAF17, mitochondrial"/>
    <property type="match status" value="1"/>
</dbReference>
<dbReference type="Gene3D" id="3.30.1360.120">
    <property type="entry name" value="Probable tRNA modification gtpase trme, domain 1"/>
    <property type="match status" value="1"/>
</dbReference>
<dbReference type="InterPro" id="IPR006222">
    <property type="entry name" value="GCV_T_N"/>
</dbReference>
<dbReference type="InterPro" id="IPR027266">
    <property type="entry name" value="TrmE/GcvT_dom1"/>
</dbReference>
<dbReference type="InterPro" id="IPR045179">
    <property type="entry name" value="YgfZ/GcvT"/>
</dbReference>
<dbReference type="InterPro" id="IPR017703">
    <property type="entry name" value="YgfZ/GcvT_CS"/>
</dbReference>
<dbReference type="NCBIfam" id="TIGR03317">
    <property type="entry name" value="ygfZ_signature"/>
    <property type="match status" value="1"/>
</dbReference>
<dbReference type="PANTHER" id="PTHR22602">
    <property type="entry name" value="TRANSFERASE CAF17, MITOCHONDRIAL-RELATED"/>
    <property type="match status" value="1"/>
</dbReference>
<dbReference type="PANTHER" id="PTHR22602:SF0">
    <property type="entry name" value="TRANSFERASE CAF17, MITOCHONDRIAL-RELATED"/>
    <property type="match status" value="1"/>
</dbReference>
<dbReference type="Pfam" id="PF25455">
    <property type="entry name" value="Beta-barrel_CAF17_C"/>
    <property type="match status" value="1"/>
</dbReference>
<dbReference type="Pfam" id="PF01571">
    <property type="entry name" value="GCV_T"/>
    <property type="match status" value="1"/>
</dbReference>
<dbReference type="SUPFAM" id="SSF103025">
    <property type="entry name" value="Folate-binding domain"/>
    <property type="match status" value="1"/>
</dbReference>
<keyword id="KW-0496">Mitochondrion</keyword>
<keyword id="KW-1185">Reference proteome</keyword>
<keyword id="KW-0809">Transit peptide</keyword>
<comment type="subcellular location">
    <subcellularLocation>
        <location evidence="1">Mitochondrion matrix</location>
    </subcellularLocation>
</comment>
<comment type="similarity">
    <text evidence="3">Belongs to the GcvT family. CAF17/IBA57 subfamily.</text>
</comment>
<organism>
    <name type="scientific">Cryptococcus neoformans var. neoformans serotype D (strain JEC21 / ATCC MYA-565)</name>
    <name type="common">Filobasidiella neoformans</name>
    <dbReference type="NCBI Taxonomy" id="214684"/>
    <lineage>
        <taxon>Eukaryota</taxon>
        <taxon>Fungi</taxon>
        <taxon>Dikarya</taxon>
        <taxon>Basidiomycota</taxon>
        <taxon>Agaricomycotina</taxon>
        <taxon>Tremellomycetes</taxon>
        <taxon>Tremellales</taxon>
        <taxon>Cryptococcaceae</taxon>
        <taxon>Cryptococcus</taxon>
        <taxon>Cryptococcus neoformans species complex</taxon>
    </lineage>
</organism>
<evidence type="ECO:0000250" key="1">
    <source>
        <dbReference type="UniProtKB" id="P47158"/>
    </source>
</evidence>
<evidence type="ECO:0000255" key="2"/>
<evidence type="ECO:0000305" key="3"/>